<evidence type="ECO:0000250" key="1"/>
<evidence type="ECO:0000255" key="2">
    <source>
        <dbReference type="PROSITE-ProRule" id="PRU00213"/>
    </source>
</evidence>
<evidence type="ECO:0000256" key="3">
    <source>
        <dbReference type="SAM" id="MobiDB-lite"/>
    </source>
</evidence>
<evidence type="ECO:0000269" key="4">
    <source>
    </source>
</evidence>
<evidence type="ECO:0000305" key="5"/>
<name>PSMD4_DROME</name>
<dbReference type="EMBL" id="S79502">
    <property type="protein sequence ID" value="AAB35145.1"/>
    <property type="molecule type" value="Genomic_DNA"/>
</dbReference>
<dbReference type="EMBL" id="AE014296">
    <property type="protein sequence ID" value="AAF51741.1"/>
    <property type="molecule type" value="Genomic_DNA"/>
</dbReference>
<dbReference type="EMBL" id="AY089333">
    <property type="protein sequence ID" value="AAL90071.2"/>
    <property type="status" value="ALT_INIT"/>
    <property type="molecule type" value="mRNA"/>
</dbReference>
<dbReference type="PIR" id="S66528">
    <property type="entry name" value="S66528"/>
</dbReference>
<dbReference type="RefSeq" id="NP_001262168.1">
    <property type="nucleotide sequence ID" value="NM_001275239.1"/>
</dbReference>
<dbReference type="RefSeq" id="NP_524204.1">
    <property type="nucleotide sequence ID" value="NM_079480.3"/>
</dbReference>
<dbReference type="SMR" id="P55035"/>
<dbReference type="BioGRID" id="65632">
    <property type="interactions" value="32"/>
</dbReference>
<dbReference type="ComplexPortal" id="CPX-9070">
    <property type="entry name" value="26S proteasome complex"/>
</dbReference>
<dbReference type="ComplexPortal" id="CPX-9087">
    <property type="entry name" value="26S proteasome complex, testis-specific variant"/>
</dbReference>
<dbReference type="DIP" id="DIP-22777N"/>
<dbReference type="FunCoup" id="P55035">
    <property type="interactions" value="2151"/>
</dbReference>
<dbReference type="IntAct" id="P55035">
    <property type="interactions" value="19"/>
</dbReference>
<dbReference type="MINT" id="P55035"/>
<dbReference type="STRING" id="7227.FBpp0078024"/>
<dbReference type="GlyGen" id="P55035">
    <property type="glycosylation" value="1 site"/>
</dbReference>
<dbReference type="PaxDb" id="7227-FBpp0078024"/>
<dbReference type="EnsemblMetazoa" id="FBtr0078368">
    <property type="protein sequence ID" value="FBpp0078024"/>
    <property type="gene ID" value="FBgn0015283"/>
</dbReference>
<dbReference type="EnsemblMetazoa" id="FBtr0333453">
    <property type="protein sequence ID" value="FBpp0305644"/>
    <property type="gene ID" value="FBgn0015283"/>
</dbReference>
<dbReference type="GeneID" id="40388"/>
<dbReference type="KEGG" id="dme:Dmel_CG7619"/>
<dbReference type="AGR" id="FB:FBgn0015283"/>
<dbReference type="CTD" id="40388"/>
<dbReference type="FlyBase" id="FBgn0015283">
    <property type="gene designation" value="Rpn10"/>
</dbReference>
<dbReference type="VEuPathDB" id="VectorBase:FBgn0015283"/>
<dbReference type="eggNOG" id="KOG2884">
    <property type="taxonomic scope" value="Eukaryota"/>
</dbReference>
<dbReference type="GeneTree" id="ENSGT00530000064050"/>
<dbReference type="HOGENOM" id="CLU_033293_0_0_1"/>
<dbReference type="InParanoid" id="P55035"/>
<dbReference type="OMA" id="QMSMQDQ"/>
<dbReference type="OrthoDB" id="1731724at2759"/>
<dbReference type="PhylomeDB" id="P55035"/>
<dbReference type="BRENDA" id="3.4.25.1">
    <property type="organism ID" value="1994"/>
</dbReference>
<dbReference type="Reactome" id="R-DME-209360">
    <property type="pathway name" value="Ubiquitination and proteolysis of phosphorylated CI"/>
</dbReference>
<dbReference type="Reactome" id="R-DME-209406">
    <property type="pathway name" value="Degradation of NF-kappa-B inhibitor, CACT"/>
</dbReference>
<dbReference type="Reactome" id="R-DME-209461">
    <property type="pathway name" value="Ubiquitination and degradation of phosphorylated ARM"/>
</dbReference>
<dbReference type="Reactome" id="R-DME-216167">
    <property type="pathway name" value="Nuclear CI is degraded"/>
</dbReference>
<dbReference type="Reactome" id="R-DME-432395">
    <property type="pathway name" value="Degradation of TIM"/>
</dbReference>
<dbReference type="Reactome" id="R-DME-432524">
    <property type="pathway name" value="Degradation of PER"/>
</dbReference>
<dbReference type="Reactome" id="R-DME-432626">
    <property type="pathway name" value="Circadian Clock pathway"/>
</dbReference>
<dbReference type="Reactome" id="R-DME-538864">
    <property type="pathway name" value="Degradation of CRY"/>
</dbReference>
<dbReference type="Reactome" id="R-DME-9907900">
    <property type="pathway name" value="Proteasome assembly"/>
</dbReference>
<dbReference type="SignaLink" id="P55035"/>
<dbReference type="BioGRID-ORCS" id="40388">
    <property type="hits" value="0 hits in 1 CRISPR screen"/>
</dbReference>
<dbReference type="GenomeRNAi" id="40388"/>
<dbReference type="PRO" id="PR:P55035"/>
<dbReference type="Proteomes" id="UP000000803">
    <property type="component" value="Chromosome 3L"/>
</dbReference>
<dbReference type="Bgee" id="FBgn0015283">
    <property type="expression patterns" value="Expressed in secondary oocyte and 195 other cell types or tissues"/>
</dbReference>
<dbReference type="ExpressionAtlas" id="P55035">
    <property type="expression patterns" value="baseline and differential"/>
</dbReference>
<dbReference type="GO" id="GO:0005737">
    <property type="term" value="C:cytoplasm"/>
    <property type="evidence" value="ECO:0007005"/>
    <property type="project" value="FlyBase"/>
</dbReference>
<dbReference type="GO" id="GO:0005829">
    <property type="term" value="C:cytosol"/>
    <property type="evidence" value="ECO:0000318"/>
    <property type="project" value="GO_Central"/>
</dbReference>
<dbReference type="GO" id="GO:0005654">
    <property type="term" value="C:nucleoplasm"/>
    <property type="evidence" value="ECO:0000304"/>
    <property type="project" value="Reactome"/>
</dbReference>
<dbReference type="GO" id="GO:0005634">
    <property type="term" value="C:nucleus"/>
    <property type="evidence" value="ECO:0007005"/>
    <property type="project" value="FlyBase"/>
</dbReference>
<dbReference type="GO" id="GO:0000502">
    <property type="term" value="C:proteasome complex"/>
    <property type="evidence" value="ECO:0000314"/>
    <property type="project" value="FlyBase"/>
</dbReference>
<dbReference type="GO" id="GO:0005838">
    <property type="term" value="C:proteasome regulatory particle"/>
    <property type="evidence" value="ECO:0000314"/>
    <property type="project" value="FlyBase"/>
</dbReference>
<dbReference type="GO" id="GO:0008540">
    <property type="term" value="C:proteasome regulatory particle, base subcomplex"/>
    <property type="evidence" value="ECO:0000250"/>
    <property type="project" value="FlyBase"/>
</dbReference>
<dbReference type="GO" id="GO:0031593">
    <property type="term" value="F:polyubiquitin modification-dependent protein binding"/>
    <property type="evidence" value="ECO:0000250"/>
    <property type="project" value="FlyBase"/>
</dbReference>
<dbReference type="GO" id="GO:0031624">
    <property type="term" value="F:ubiquitin conjugating enzyme binding"/>
    <property type="evidence" value="ECO:0000353"/>
    <property type="project" value="FlyBase"/>
</dbReference>
<dbReference type="GO" id="GO:0008270">
    <property type="term" value="F:zinc ion binding"/>
    <property type="evidence" value="ECO:0000314"/>
    <property type="project" value="FlyBase"/>
</dbReference>
<dbReference type="GO" id="GO:0000070">
    <property type="term" value="P:mitotic sister chromatid segregation"/>
    <property type="evidence" value="ECO:0000315"/>
    <property type="project" value="FlyBase"/>
</dbReference>
<dbReference type="GO" id="GO:0043161">
    <property type="term" value="P:proteasome-mediated ubiquitin-dependent protein catabolic process"/>
    <property type="evidence" value="ECO:0000315"/>
    <property type="project" value="FlyBase"/>
</dbReference>
<dbReference type="CDD" id="cd22297">
    <property type="entry name" value="PSMD4_RAZUL"/>
    <property type="match status" value="1"/>
</dbReference>
<dbReference type="CDD" id="cd01452">
    <property type="entry name" value="VWA_26S_proteasome_subunit"/>
    <property type="match status" value="1"/>
</dbReference>
<dbReference type="FunFam" id="3.40.50.410:FF:000005">
    <property type="entry name" value="26S proteasome non-ATPase regulatory subunit 4"/>
    <property type="match status" value="1"/>
</dbReference>
<dbReference type="FunFam" id="6.10.300.40:FF:000003">
    <property type="entry name" value="26S proteasome non-ATPase regulatory subunit 4"/>
    <property type="match status" value="1"/>
</dbReference>
<dbReference type="Gene3D" id="6.10.250.380">
    <property type="match status" value="1"/>
</dbReference>
<dbReference type="Gene3D" id="6.10.300.40">
    <property type="match status" value="1"/>
</dbReference>
<dbReference type="Gene3D" id="3.40.50.410">
    <property type="entry name" value="von Willebrand factor, type A domain"/>
    <property type="match status" value="1"/>
</dbReference>
<dbReference type="InterPro" id="IPR027040">
    <property type="entry name" value="PSMD4"/>
</dbReference>
<dbReference type="InterPro" id="IPR049590">
    <property type="entry name" value="PSMD4_RAZUL-like"/>
</dbReference>
<dbReference type="InterPro" id="IPR003903">
    <property type="entry name" value="UIM_dom"/>
</dbReference>
<dbReference type="InterPro" id="IPR002035">
    <property type="entry name" value="VWF_A"/>
</dbReference>
<dbReference type="InterPro" id="IPR036465">
    <property type="entry name" value="vWFA_dom_sf"/>
</dbReference>
<dbReference type="PANTHER" id="PTHR10223">
    <property type="entry name" value="26S PROTEASOME NON-ATPASE REGULATORY SUBUNIT 4"/>
    <property type="match status" value="1"/>
</dbReference>
<dbReference type="PANTHER" id="PTHR10223:SF0">
    <property type="entry name" value="26S PROTEASOME NON-ATPASE REGULATORY SUBUNIT 4"/>
    <property type="match status" value="1"/>
</dbReference>
<dbReference type="Pfam" id="PF02809">
    <property type="entry name" value="UIM"/>
    <property type="match status" value="3"/>
</dbReference>
<dbReference type="Pfam" id="PF13519">
    <property type="entry name" value="VWA_2"/>
    <property type="match status" value="1"/>
</dbReference>
<dbReference type="SMART" id="SM00726">
    <property type="entry name" value="UIM"/>
    <property type="match status" value="3"/>
</dbReference>
<dbReference type="SMART" id="SM00327">
    <property type="entry name" value="VWA"/>
    <property type="match status" value="1"/>
</dbReference>
<dbReference type="SUPFAM" id="SSF53300">
    <property type="entry name" value="vWA-like"/>
    <property type="match status" value="1"/>
</dbReference>
<dbReference type="PROSITE" id="PS50330">
    <property type="entry name" value="UIM"/>
    <property type="match status" value="3"/>
</dbReference>
<sequence length="396" mass="42618">MVLESTMICFDNSDFQRNGDYFPTRLIVQRDGINLVCLTKLRSNPENNVGLMTLSNTVEVLATLTSDAGRIFSKMHLVQPKGEINLLTGIRIAHLVLKHRQGKNHKMRIVVFVGSPINHEEGDLVKQAKRLKKEKVNVDIVSFGDHGNNNEILTAFINALNGKDGTGSHLVSVPRGSVLSDALLSSPIIQGEDGMGGAGLGGNVFEFGVDPNEDPELALALRVSMEEQRQRQESEQRRANPDGAPPTGGDAGGGGGVSGSGPGNEESAGAENEANTEEAMLQRALALSTETPEDNLPDFANMTEEEQIAFAMQMSMQDAPDDSVTQQAKRPKTDEANAPMDVDEDYSEVIGDPAFLQSVLENLPGVDPQSEAVRDAVGSLNKDKDKKSDGKDSQKK</sequence>
<feature type="chain" id="PRO_0000173830" description="26S proteasome non-ATPase regulatory subunit 4">
    <location>
        <begin position="1"/>
        <end position="396"/>
    </location>
</feature>
<feature type="domain" description="VWFA">
    <location>
        <begin position="1"/>
        <end position="188"/>
    </location>
</feature>
<feature type="domain" description="UIM 1" evidence="2">
    <location>
        <begin position="212"/>
        <end position="231"/>
    </location>
</feature>
<feature type="domain" description="UIM 2" evidence="2">
    <location>
        <begin position="276"/>
        <end position="295"/>
    </location>
</feature>
<feature type="domain" description="UIM 3" evidence="2">
    <location>
        <begin position="303"/>
        <end position="322"/>
    </location>
</feature>
<feature type="region of interest" description="Disordered" evidence="3">
    <location>
        <begin position="225"/>
        <end position="278"/>
    </location>
</feature>
<feature type="region of interest" description="Disordered" evidence="3">
    <location>
        <begin position="311"/>
        <end position="341"/>
    </location>
</feature>
<feature type="region of interest" description="Disordered" evidence="3">
    <location>
        <begin position="360"/>
        <end position="396"/>
    </location>
</feature>
<feature type="compositionally biased region" description="Basic and acidic residues" evidence="3">
    <location>
        <begin position="225"/>
        <end position="240"/>
    </location>
</feature>
<feature type="compositionally biased region" description="Gly residues" evidence="3">
    <location>
        <begin position="249"/>
        <end position="262"/>
    </location>
</feature>
<feature type="compositionally biased region" description="Low complexity" evidence="3">
    <location>
        <begin position="263"/>
        <end position="278"/>
    </location>
</feature>
<feature type="compositionally biased region" description="Basic and acidic residues" evidence="3">
    <location>
        <begin position="381"/>
        <end position="396"/>
    </location>
</feature>
<feature type="sequence conflict" description="In Ref. 1; AAB35145." evidence="5" ref="1">
    <original>C</original>
    <variation>S</variation>
    <location>
        <position position="9"/>
    </location>
</feature>
<comment type="function">
    <text>Binds and presumably selects ubiquitin-conjugates for destruction.</text>
</comment>
<comment type="subunit">
    <text evidence="1 4">The 26S proteasome is composed of a core protease, known as the 20S proteasome, capped at one or both ends by the 19S regulatory complex (RC). The RC is composed of at least 18 different subunits in two subcomplexes, the base and the lid, which form the portions proximal and distal to the 20S proteolytic core, respectively (By similarity). Interacts with Ubc4.</text>
</comment>
<comment type="interaction">
    <interactant intactId="EBI-146479">
        <id>P55035</id>
    </interactant>
    <interactant intactId="EBI-224571">
        <id>P52486</id>
        <label>Ubc4</label>
    </interactant>
    <organismsDiffer>false</organismsDiffer>
    <experiments>2</experiments>
</comment>
<comment type="interaction">
    <interactant intactId="EBI-146479">
        <id>P55035</id>
    </interactant>
    <interactant intactId="EBI-100499">
        <id>Q9VWD9</id>
        <label>Ubqn</label>
    </interactant>
    <organismsDiffer>false</organismsDiffer>
    <experiments>4</experiments>
</comment>
<comment type="similarity">
    <text evidence="5">Belongs to the proteasome subunit S5A family.</text>
</comment>
<comment type="sequence caution" evidence="5">
    <conflict type="erroneous initiation">
        <sequence resource="EMBL-CDS" id="AAL90071"/>
    </conflict>
    <text>Extended N-terminus.</text>
</comment>
<proteinExistence type="evidence at protein level"/>
<organism>
    <name type="scientific">Drosophila melanogaster</name>
    <name type="common">Fruit fly</name>
    <dbReference type="NCBI Taxonomy" id="7227"/>
    <lineage>
        <taxon>Eukaryota</taxon>
        <taxon>Metazoa</taxon>
        <taxon>Ecdysozoa</taxon>
        <taxon>Arthropoda</taxon>
        <taxon>Hexapoda</taxon>
        <taxon>Insecta</taxon>
        <taxon>Pterygota</taxon>
        <taxon>Neoptera</taxon>
        <taxon>Endopterygota</taxon>
        <taxon>Diptera</taxon>
        <taxon>Brachycera</taxon>
        <taxon>Muscomorpha</taxon>
        <taxon>Ephydroidea</taxon>
        <taxon>Drosophilidae</taxon>
        <taxon>Drosophila</taxon>
        <taxon>Sophophora</taxon>
    </lineage>
</organism>
<accession>P55035</accession>
<accession>Q86R87</accession>
<accession>Q9V473</accession>
<keyword id="KW-0647">Proteasome</keyword>
<keyword id="KW-1185">Reference proteome</keyword>
<keyword id="KW-0677">Repeat</keyword>
<reference key="1">
    <citation type="journal article" date="1995" name="Eur. J. Biochem.">
        <title>Cloning and sequencing a non-ATPase subunit of the regulatory complex of the Drosophila 26S protease.</title>
        <authorList>
            <person name="Haracska L."/>
            <person name="Udvardy A."/>
        </authorList>
    </citation>
    <scope>NUCLEOTIDE SEQUENCE [GENOMIC DNA]</scope>
</reference>
<reference key="2">
    <citation type="journal article" date="2000" name="Science">
        <title>The genome sequence of Drosophila melanogaster.</title>
        <authorList>
            <person name="Adams M.D."/>
            <person name="Celniker S.E."/>
            <person name="Holt R.A."/>
            <person name="Evans C.A."/>
            <person name="Gocayne J.D."/>
            <person name="Amanatides P.G."/>
            <person name="Scherer S.E."/>
            <person name="Li P.W."/>
            <person name="Hoskins R.A."/>
            <person name="Galle R.F."/>
            <person name="George R.A."/>
            <person name="Lewis S.E."/>
            <person name="Richards S."/>
            <person name="Ashburner M."/>
            <person name="Henderson S.N."/>
            <person name="Sutton G.G."/>
            <person name="Wortman J.R."/>
            <person name="Yandell M.D."/>
            <person name="Zhang Q."/>
            <person name="Chen L.X."/>
            <person name="Brandon R.C."/>
            <person name="Rogers Y.-H.C."/>
            <person name="Blazej R.G."/>
            <person name="Champe M."/>
            <person name="Pfeiffer B.D."/>
            <person name="Wan K.H."/>
            <person name="Doyle C."/>
            <person name="Baxter E.G."/>
            <person name="Helt G."/>
            <person name="Nelson C.R."/>
            <person name="Miklos G.L.G."/>
            <person name="Abril J.F."/>
            <person name="Agbayani A."/>
            <person name="An H.-J."/>
            <person name="Andrews-Pfannkoch C."/>
            <person name="Baldwin D."/>
            <person name="Ballew R.M."/>
            <person name="Basu A."/>
            <person name="Baxendale J."/>
            <person name="Bayraktaroglu L."/>
            <person name="Beasley E.M."/>
            <person name="Beeson K.Y."/>
            <person name="Benos P.V."/>
            <person name="Berman B.P."/>
            <person name="Bhandari D."/>
            <person name="Bolshakov S."/>
            <person name="Borkova D."/>
            <person name="Botchan M.R."/>
            <person name="Bouck J."/>
            <person name="Brokstein P."/>
            <person name="Brottier P."/>
            <person name="Burtis K.C."/>
            <person name="Busam D.A."/>
            <person name="Butler H."/>
            <person name="Cadieu E."/>
            <person name="Center A."/>
            <person name="Chandra I."/>
            <person name="Cherry J.M."/>
            <person name="Cawley S."/>
            <person name="Dahlke C."/>
            <person name="Davenport L.B."/>
            <person name="Davies P."/>
            <person name="de Pablos B."/>
            <person name="Delcher A."/>
            <person name="Deng Z."/>
            <person name="Mays A.D."/>
            <person name="Dew I."/>
            <person name="Dietz S.M."/>
            <person name="Dodson K."/>
            <person name="Doup L.E."/>
            <person name="Downes M."/>
            <person name="Dugan-Rocha S."/>
            <person name="Dunkov B.C."/>
            <person name="Dunn P."/>
            <person name="Durbin K.J."/>
            <person name="Evangelista C.C."/>
            <person name="Ferraz C."/>
            <person name="Ferriera S."/>
            <person name="Fleischmann W."/>
            <person name="Fosler C."/>
            <person name="Gabrielian A.E."/>
            <person name="Garg N.S."/>
            <person name="Gelbart W.M."/>
            <person name="Glasser K."/>
            <person name="Glodek A."/>
            <person name="Gong F."/>
            <person name="Gorrell J.H."/>
            <person name="Gu Z."/>
            <person name="Guan P."/>
            <person name="Harris M."/>
            <person name="Harris N.L."/>
            <person name="Harvey D.A."/>
            <person name="Heiman T.J."/>
            <person name="Hernandez J.R."/>
            <person name="Houck J."/>
            <person name="Hostin D."/>
            <person name="Houston K.A."/>
            <person name="Howland T.J."/>
            <person name="Wei M.-H."/>
            <person name="Ibegwam C."/>
            <person name="Jalali M."/>
            <person name="Kalush F."/>
            <person name="Karpen G.H."/>
            <person name="Ke Z."/>
            <person name="Kennison J.A."/>
            <person name="Ketchum K.A."/>
            <person name="Kimmel B.E."/>
            <person name="Kodira C.D."/>
            <person name="Kraft C.L."/>
            <person name="Kravitz S."/>
            <person name="Kulp D."/>
            <person name="Lai Z."/>
            <person name="Lasko P."/>
            <person name="Lei Y."/>
            <person name="Levitsky A.A."/>
            <person name="Li J.H."/>
            <person name="Li Z."/>
            <person name="Liang Y."/>
            <person name="Lin X."/>
            <person name="Liu X."/>
            <person name="Mattei B."/>
            <person name="McIntosh T.C."/>
            <person name="McLeod M.P."/>
            <person name="McPherson D."/>
            <person name="Merkulov G."/>
            <person name="Milshina N.V."/>
            <person name="Mobarry C."/>
            <person name="Morris J."/>
            <person name="Moshrefi A."/>
            <person name="Mount S.M."/>
            <person name="Moy M."/>
            <person name="Murphy B."/>
            <person name="Murphy L."/>
            <person name="Muzny D.M."/>
            <person name="Nelson D.L."/>
            <person name="Nelson D.R."/>
            <person name="Nelson K.A."/>
            <person name="Nixon K."/>
            <person name="Nusskern D.R."/>
            <person name="Pacleb J.M."/>
            <person name="Palazzolo M."/>
            <person name="Pittman G.S."/>
            <person name="Pan S."/>
            <person name="Pollard J."/>
            <person name="Puri V."/>
            <person name="Reese M.G."/>
            <person name="Reinert K."/>
            <person name="Remington K."/>
            <person name="Saunders R.D.C."/>
            <person name="Scheeler F."/>
            <person name="Shen H."/>
            <person name="Shue B.C."/>
            <person name="Siden-Kiamos I."/>
            <person name="Simpson M."/>
            <person name="Skupski M.P."/>
            <person name="Smith T.J."/>
            <person name="Spier E."/>
            <person name="Spradling A.C."/>
            <person name="Stapleton M."/>
            <person name="Strong R."/>
            <person name="Sun E."/>
            <person name="Svirskas R."/>
            <person name="Tector C."/>
            <person name="Turner R."/>
            <person name="Venter E."/>
            <person name="Wang A.H."/>
            <person name="Wang X."/>
            <person name="Wang Z.-Y."/>
            <person name="Wassarman D.A."/>
            <person name="Weinstock G.M."/>
            <person name="Weissenbach J."/>
            <person name="Williams S.M."/>
            <person name="Woodage T."/>
            <person name="Worley K.C."/>
            <person name="Wu D."/>
            <person name="Yang S."/>
            <person name="Yao Q.A."/>
            <person name="Ye J."/>
            <person name="Yeh R.-F."/>
            <person name="Zaveri J.S."/>
            <person name="Zhan M."/>
            <person name="Zhang G."/>
            <person name="Zhao Q."/>
            <person name="Zheng L."/>
            <person name="Zheng X.H."/>
            <person name="Zhong F.N."/>
            <person name="Zhong W."/>
            <person name="Zhou X."/>
            <person name="Zhu S.C."/>
            <person name="Zhu X."/>
            <person name="Smith H.O."/>
            <person name="Gibbs R.A."/>
            <person name="Myers E.W."/>
            <person name="Rubin G.M."/>
            <person name="Venter J.C."/>
        </authorList>
    </citation>
    <scope>NUCLEOTIDE SEQUENCE [LARGE SCALE GENOMIC DNA]</scope>
    <source>
        <strain>Berkeley</strain>
    </source>
</reference>
<reference key="3">
    <citation type="journal article" date="2002" name="Genome Biol.">
        <title>Annotation of the Drosophila melanogaster euchromatic genome: a systematic review.</title>
        <authorList>
            <person name="Misra S."/>
            <person name="Crosby M.A."/>
            <person name="Mungall C.J."/>
            <person name="Matthews B.B."/>
            <person name="Campbell K.S."/>
            <person name="Hradecky P."/>
            <person name="Huang Y."/>
            <person name="Kaminker J.S."/>
            <person name="Millburn G.H."/>
            <person name="Prochnik S.E."/>
            <person name="Smith C.D."/>
            <person name="Tupy J.L."/>
            <person name="Whitfield E.J."/>
            <person name="Bayraktaroglu L."/>
            <person name="Berman B.P."/>
            <person name="Bettencourt B.R."/>
            <person name="Celniker S.E."/>
            <person name="de Grey A.D.N.J."/>
            <person name="Drysdale R.A."/>
            <person name="Harris N.L."/>
            <person name="Richter J."/>
            <person name="Russo S."/>
            <person name="Schroeder A.J."/>
            <person name="Shu S.Q."/>
            <person name="Stapleton M."/>
            <person name="Yamada C."/>
            <person name="Ashburner M."/>
            <person name="Gelbart W.M."/>
            <person name="Rubin G.M."/>
            <person name="Lewis S.E."/>
        </authorList>
    </citation>
    <scope>GENOME REANNOTATION</scope>
    <source>
        <strain>Berkeley</strain>
    </source>
</reference>
<reference key="4">
    <citation type="journal article" date="2002" name="Genome Biol.">
        <title>A Drosophila full-length cDNA resource.</title>
        <authorList>
            <person name="Stapleton M."/>
            <person name="Carlson J.W."/>
            <person name="Brokstein P."/>
            <person name="Yu C."/>
            <person name="Champe M."/>
            <person name="George R.A."/>
            <person name="Guarin H."/>
            <person name="Kronmiller B."/>
            <person name="Pacleb J.M."/>
            <person name="Park S."/>
            <person name="Wan K.H."/>
            <person name="Rubin G.M."/>
            <person name="Celniker S.E."/>
        </authorList>
    </citation>
    <scope>NUCLEOTIDE SEQUENCE [LARGE SCALE MRNA]</scope>
    <source>
        <strain>Berkeley</strain>
        <tissue>Testis</tissue>
    </source>
</reference>
<reference key="5">
    <citation type="journal article" date="2002" name="Mol. Genet. Genomics">
        <title>UbcD4, a ubiquitin-conjugating enzyme in Drosophila melanogaster expressed in pole cells.</title>
        <authorList>
            <person name="Canning M."/>
            <person name="Kirby R."/>
            <person name="Finnegan D."/>
        </authorList>
    </citation>
    <scope>INTERACTION WITH UBCD4</scope>
    <source>
        <strain>Canton-S</strain>
        <strain>Oregon-R</strain>
    </source>
</reference>
<gene>
    <name type="primary">Rpn10</name>
    <name type="synonym">PROS-54</name>
    <name type="synonym">Pros54</name>
    <name type="ORF">CG7619</name>
</gene>
<protein>
    <recommendedName>
        <fullName>26S proteasome non-ATPase regulatory subunit 4</fullName>
    </recommendedName>
    <alternativeName>
        <fullName>26S proteasome regulatory subunit RPN10</fullName>
    </alternativeName>
    <alternativeName>
        <fullName>26S proteasome regulatory subunit S5A</fullName>
    </alternativeName>
    <alternativeName>
        <fullName>54 kDa subunit of mu particle</fullName>
    </alternativeName>
    <alternativeName>
        <fullName>Multiubiquitin chain-binding protein</fullName>
    </alternativeName>
    <alternativeName>
        <fullName>p54</fullName>
    </alternativeName>
</protein>